<gene>
    <name evidence="6" type="primary">ausF</name>
    <name type="ORF">AN9247</name>
</gene>
<protein>
    <recommendedName>
        <fullName evidence="6">Austinoid biosynthesis clusters protein F</fullName>
    </recommendedName>
</protein>
<accession>Q5AR33</accession>
<accession>C8VQ84</accession>
<organism>
    <name type="scientific">Emericella nidulans (strain FGSC A4 / ATCC 38163 / CBS 112.46 / NRRL 194 / M139)</name>
    <name type="common">Aspergillus nidulans</name>
    <dbReference type="NCBI Taxonomy" id="227321"/>
    <lineage>
        <taxon>Eukaryota</taxon>
        <taxon>Fungi</taxon>
        <taxon>Dikarya</taxon>
        <taxon>Ascomycota</taxon>
        <taxon>Pezizomycotina</taxon>
        <taxon>Eurotiomycetes</taxon>
        <taxon>Eurotiomycetidae</taxon>
        <taxon>Eurotiales</taxon>
        <taxon>Aspergillaceae</taxon>
        <taxon>Aspergillus</taxon>
        <taxon>Aspergillus subgen. Nidulantes</taxon>
    </lineage>
</organism>
<proteinExistence type="inferred from homology"/>
<dbReference type="EMBL" id="BN001308">
    <property type="protein sequence ID" value="CBF87241.1"/>
    <property type="molecule type" value="Genomic_DNA"/>
</dbReference>
<dbReference type="EMBL" id="AACD01000172">
    <property type="protein sequence ID" value="EAA66314.1"/>
    <property type="molecule type" value="Genomic_DNA"/>
</dbReference>
<dbReference type="RefSeq" id="XP_682516.1">
    <property type="nucleotide sequence ID" value="XM_677424.1"/>
</dbReference>
<dbReference type="SMR" id="Q5AR33"/>
<dbReference type="STRING" id="227321.Q5AR33"/>
<dbReference type="EnsemblFungi" id="CBF87241">
    <property type="protein sequence ID" value="CBF87241"/>
    <property type="gene ID" value="ANIA_09247"/>
</dbReference>
<dbReference type="KEGG" id="ani:ANIA_09247"/>
<dbReference type="eggNOG" id="ENOG502S4TQ">
    <property type="taxonomic scope" value="Eukaryota"/>
</dbReference>
<dbReference type="HOGENOM" id="CLU_108113_3_0_1"/>
<dbReference type="InParanoid" id="Q5AR33"/>
<dbReference type="OMA" id="KHISYGD"/>
<dbReference type="OrthoDB" id="3758478at2759"/>
<dbReference type="UniPathway" id="UPA00213"/>
<dbReference type="Proteomes" id="UP000000560">
    <property type="component" value="Chromosome VIII"/>
</dbReference>
<dbReference type="GO" id="GO:0016114">
    <property type="term" value="P:terpenoid biosynthetic process"/>
    <property type="evidence" value="ECO:0007669"/>
    <property type="project" value="UniProtKB-UniPathway"/>
</dbReference>
<dbReference type="FunFam" id="3.10.450.50:FF:000062">
    <property type="entry name" value="Austinol synthesis protein F"/>
    <property type="match status" value="1"/>
</dbReference>
<dbReference type="Gene3D" id="3.10.450.50">
    <property type="match status" value="1"/>
</dbReference>
<dbReference type="InterPro" id="IPR050977">
    <property type="entry name" value="Fungal_Meroterpenoid_Isomerase"/>
</dbReference>
<dbReference type="InterPro" id="IPR032710">
    <property type="entry name" value="NTF2-like_dom_sf"/>
</dbReference>
<dbReference type="PANTHER" id="PTHR39598:SF1">
    <property type="entry name" value="AUSTINOID BIOSYNTHESIS CLUSTERS PROTEIN F-RELATED"/>
    <property type="match status" value="1"/>
</dbReference>
<dbReference type="PANTHER" id="PTHR39598">
    <property type="entry name" value="AUSTINOL SYNTHESIS PROTEIN F-RELATED"/>
    <property type="match status" value="1"/>
</dbReference>
<dbReference type="SUPFAM" id="SSF54427">
    <property type="entry name" value="NTF2-like"/>
    <property type="match status" value="1"/>
</dbReference>
<sequence>MTPISVILVTDNKLTRPKTMSTTREKLLRTTSRFVSTFGSFDIEEILSIRTPTCLYHQCCPSFNKNVVTNEETRANFPQFIATFKRFDFSIIEPDHTLVDEAARRVMIRAKASAESIVGAYENEYIFILKMTDDCRFIEEIYEFYDTIRLKDLQYRLEAKHISYGDAAPFKTRDTQL</sequence>
<comment type="function">
    <text evidence="2 3 4 5">Part of the gene cluster B that mediates the biosynthesis of austinol and dehydroaustinol, two fungal meroterpenoids (PubMed:22329759). The first step of the pathway is the synthesis of 3,5-dimethylorsellinic acid by the polyketide synthase ausA (PubMed:22329759). 3,5-dimethylorsellinic acid is then prenylated by the polyprenyl transferase ausN (PubMed:22329759). Further epoxidation by the FAD-dependent monooxygenase ausM and cyclization by the probable terpene cyclase ausL lead to the formation of protoaustinoid A (PubMed:22329759). Protoaustinoid A is then oxidized to spiro-lactone preaustinoid A3 by the combined action of the FAD-binding monooxygenases ausB and ausC, and the dioxygenase ausE (PubMed:22329759, PubMed:23865690). Acid-catalyzed keto-rearrangement and ring contraction of the tetraketide portion of preaustinoid A3 by ausJ lead to the formation of preaustinoid A4 (PubMed:22329759). The aldo-keto reductase ausK, with the help of ausH, is involved in the next step by transforming preaustinoid A4 into isoaustinone which is in turn hydroxylated by the P450 monooxygenase ausI to form austinolide (PubMed:22329759). Finally, the cytochrome P450 monooxygenase ausG modifies austinolide to austinol (PubMed:22329759). Austinol can be further modified to dehydroaustinol which forms a diffusible complex with diorcinol that initiates conidiation (PubMed:22234162, PubMed:22329759). Due to genetic rearrangements of the clusters and the subsequent loss of some enzymes, the end products of the Emericella nidulans austinoid biosynthesis clusters are austinol and dehydroaustinol, even if additional enzymes, such as the O-acetyltransferase ausQ and the cytochrome P450 monooxygenase ausR are still functional (PubMed:29076725).</text>
</comment>
<comment type="pathway">
    <text evidence="3">Secondary metabolite biosynthesis; terpenoid biosynthesis.</text>
</comment>
<comment type="subunit">
    <text evidence="1">Homodimer.</text>
</comment>
<comment type="disruption phenotype">
    <text evidence="3">Strongly decreases the production of austinol and dehydroaustinol (PubMed:22329759).</text>
</comment>
<comment type="miscellaneous">
    <text evidence="8">In A.calidoustus, the austinoid gene cluster lies on a contiguous DNA region, while clusters from E.nidulans and P.brasilianum are split in their respective genomes. Genetic rearrangements provoked variability among the clusters and E.nidulans produces the least number of austionoid derivatives with the end products austinol and dehydroaustinol, while P.brasilianum can produce until acetoxydehydroaustin, and A.calidoustus produces the highest number of identified derivatives.</text>
</comment>
<comment type="similarity">
    <text evidence="7">Belongs to the trt14 isomerase family.</text>
</comment>
<reference key="1">
    <citation type="journal article" date="2005" name="Nature">
        <title>Sequencing of Aspergillus nidulans and comparative analysis with A. fumigatus and A. oryzae.</title>
        <authorList>
            <person name="Galagan J.E."/>
            <person name="Calvo S.E."/>
            <person name="Cuomo C."/>
            <person name="Ma L.-J."/>
            <person name="Wortman J.R."/>
            <person name="Batzoglou S."/>
            <person name="Lee S.-I."/>
            <person name="Bastuerkmen M."/>
            <person name="Spevak C.C."/>
            <person name="Clutterbuck J."/>
            <person name="Kapitonov V."/>
            <person name="Jurka J."/>
            <person name="Scazzocchio C."/>
            <person name="Farman M.L."/>
            <person name="Butler J."/>
            <person name="Purcell S."/>
            <person name="Harris S."/>
            <person name="Braus G.H."/>
            <person name="Draht O."/>
            <person name="Busch S."/>
            <person name="D'Enfert C."/>
            <person name="Bouchier C."/>
            <person name="Goldman G.H."/>
            <person name="Bell-Pedersen D."/>
            <person name="Griffiths-Jones S."/>
            <person name="Doonan J.H."/>
            <person name="Yu J."/>
            <person name="Vienken K."/>
            <person name="Pain A."/>
            <person name="Freitag M."/>
            <person name="Selker E.U."/>
            <person name="Archer D.B."/>
            <person name="Penalva M.A."/>
            <person name="Oakley B.R."/>
            <person name="Momany M."/>
            <person name="Tanaka T."/>
            <person name="Kumagai T."/>
            <person name="Asai K."/>
            <person name="Machida M."/>
            <person name="Nierman W.C."/>
            <person name="Denning D.W."/>
            <person name="Caddick M.X."/>
            <person name="Hynes M."/>
            <person name="Paoletti M."/>
            <person name="Fischer R."/>
            <person name="Miller B.L."/>
            <person name="Dyer P.S."/>
            <person name="Sachs M.S."/>
            <person name="Osmani S.A."/>
            <person name="Birren B.W."/>
        </authorList>
    </citation>
    <scope>NUCLEOTIDE SEQUENCE [LARGE SCALE GENOMIC DNA]</scope>
    <source>
        <strain>FGSC A4 / ATCC 38163 / CBS 112.46 / NRRL 194 / M139</strain>
    </source>
</reference>
<reference key="2">
    <citation type="journal article" date="2009" name="Fungal Genet. Biol.">
        <title>The 2008 update of the Aspergillus nidulans genome annotation: a community effort.</title>
        <authorList>
            <person name="Wortman J.R."/>
            <person name="Gilsenan J.M."/>
            <person name="Joardar V."/>
            <person name="Deegan J."/>
            <person name="Clutterbuck J."/>
            <person name="Andersen M.R."/>
            <person name="Archer D."/>
            <person name="Bencina M."/>
            <person name="Braus G."/>
            <person name="Coutinho P."/>
            <person name="von Dohren H."/>
            <person name="Doonan J."/>
            <person name="Driessen A.J."/>
            <person name="Durek P."/>
            <person name="Espeso E."/>
            <person name="Fekete E."/>
            <person name="Flipphi M."/>
            <person name="Estrada C.G."/>
            <person name="Geysens S."/>
            <person name="Goldman G."/>
            <person name="de Groot P.W."/>
            <person name="Hansen K."/>
            <person name="Harris S.D."/>
            <person name="Heinekamp T."/>
            <person name="Helmstaedt K."/>
            <person name="Henrissat B."/>
            <person name="Hofmann G."/>
            <person name="Homan T."/>
            <person name="Horio T."/>
            <person name="Horiuchi H."/>
            <person name="James S."/>
            <person name="Jones M."/>
            <person name="Karaffa L."/>
            <person name="Karanyi Z."/>
            <person name="Kato M."/>
            <person name="Keller N."/>
            <person name="Kelly D.E."/>
            <person name="Kiel J.A."/>
            <person name="Kim J.M."/>
            <person name="van der Klei I.J."/>
            <person name="Klis F.M."/>
            <person name="Kovalchuk A."/>
            <person name="Krasevec N."/>
            <person name="Kubicek C.P."/>
            <person name="Liu B."/>
            <person name="Maccabe A."/>
            <person name="Meyer V."/>
            <person name="Mirabito P."/>
            <person name="Miskei M."/>
            <person name="Mos M."/>
            <person name="Mullins J."/>
            <person name="Nelson D.R."/>
            <person name="Nielsen J."/>
            <person name="Oakley B.R."/>
            <person name="Osmani S.A."/>
            <person name="Pakula T."/>
            <person name="Paszewski A."/>
            <person name="Paulsen I."/>
            <person name="Pilsyk S."/>
            <person name="Pocsi I."/>
            <person name="Punt P.J."/>
            <person name="Ram A.F."/>
            <person name="Ren Q."/>
            <person name="Robellet X."/>
            <person name="Robson G."/>
            <person name="Seiboth B."/>
            <person name="van Solingen P."/>
            <person name="Specht T."/>
            <person name="Sun J."/>
            <person name="Taheri-Talesh N."/>
            <person name="Takeshita N."/>
            <person name="Ussery D."/>
            <person name="vanKuyk P.A."/>
            <person name="Visser H."/>
            <person name="van de Vondervoort P.J."/>
            <person name="de Vries R.P."/>
            <person name="Walton J."/>
            <person name="Xiang X."/>
            <person name="Xiong Y."/>
            <person name="Zeng A.P."/>
            <person name="Brandt B.W."/>
            <person name="Cornell M.J."/>
            <person name="van den Hondel C.A."/>
            <person name="Visser J."/>
            <person name="Oliver S.G."/>
            <person name="Turner G."/>
        </authorList>
    </citation>
    <scope>GENOME REANNOTATION</scope>
    <source>
        <strain>FGSC A4 / ATCC 38163 / CBS 112.46 / NRRL 194 / M139</strain>
    </source>
</reference>
<reference key="3">
    <citation type="journal article" date="2012" name="ACS Chem. Biol.">
        <title>Signaling the induction of sporulation involves the interaction of two secondary metabolites in Aspergillus nidulans.</title>
        <authorList>
            <person name="Rodriguez-Urra A.B."/>
            <person name="Jimenez C."/>
            <person name="Nieto M.I."/>
            <person name="Rodriguez J."/>
            <person name="Hayashi H."/>
            <person name="Ugalde U."/>
        </authorList>
    </citation>
    <scope>FUNCTION</scope>
</reference>
<reference key="4">
    <citation type="journal article" date="2012" name="J. Am. Chem. Soc.">
        <title>Two separate gene clusters encode the biosynthetic pathway for the meroterpenoids austinol and dehydroaustinol in Aspergillus nidulans.</title>
        <authorList>
            <person name="Lo H.C."/>
            <person name="Entwistle R."/>
            <person name="Guo C.J."/>
            <person name="Ahuja M."/>
            <person name="Szewczyk E."/>
            <person name="Hung J.H."/>
            <person name="Chiang Y.M."/>
            <person name="Oakley B.R."/>
            <person name="Wang C.C."/>
        </authorList>
    </citation>
    <scope>FUNCTION</scope>
    <scope>DISRUPTION PHENOTYPE</scope>
</reference>
<reference key="5">
    <citation type="journal article" date="2013" name="J. Am. Chem. Soc.">
        <title>Spiro-ring formation is catalyzed by a multifunctional dioxygenase in austinol biosynthesis.</title>
        <authorList>
            <person name="Matsuda Y."/>
            <person name="Awakawa T."/>
            <person name="Wakimoto T."/>
            <person name="Abe I."/>
        </authorList>
    </citation>
    <scope>FUNCTION</scope>
</reference>
<reference key="6">
    <citation type="journal article" date="2017" name="ACS Chem. Biol.">
        <title>Rewiring of the austinoid biosynthetic pathway in filamentous fungi.</title>
        <authorList>
            <person name="Mattern D.J."/>
            <person name="Valiante V."/>
            <person name="Horn F."/>
            <person name="Petzke L."/>
            <person name="Brakhage A.A."/>
        </authorList>
    </citation>
    <scope>FUNCTION</scope>
</reference>
<feature type="chain" id="PRO_0000436487" description="Austinoid biosynthesis clusters protein F">
    <location>
        <begin position="1"/>
        <end position="177"/>
    </location>
</feature>
<keyword id="KW-1185">Reference proteome</keyword>
<evidence type="ECO:0000250" key="1">
    <source>
        <dbReference type="UniProtKB" id="Q5AR31"/>
    </source>
</evidence>
<evidence type="ECO:0000269" key="2">
    <source>
    </source>
</evidence>
<evidence type="ECO:0000269" key="3">
    <source>
    </source>
</evidence>
<evidence type="ECO:0000269" key="4">
    <source>
    </source>
</evidence>
<evidence type="ECO:0000269" key="5">
    <source>
    </source>
</evidence>
<evidence type="ECO:0000303" key="6">
    <source>
    </source>
</evidence>
<evidence type="ECO:0000305" key="7"/>
<evidence type="ECO:0000305" key="8">
    <source>
    </source>
</evidence>
<name>AUSF_EMENI</name>